<proteinExistence type="evidence at transcript level"/>
<organism>
    <name type="scientific">Dictyostelium discoideum</name>
    <name type="common">Social amoeba</name>
    <dbReference type="NCBI Taxonomy" id="44689"/>
    <lineage>
        <taxon>Eukaryota</taxon>
        <taxon>Amoebozoa</taxon>
        <taxon>Evosea</taxon>
        <taxon>Eumycetozoa</taxon>
        <taxon>Dictyostelia</taxon>
        <taxon>Dictyosteliales</taxon>
        <taxon>Dictyosteliaceae</taxon>
        <taxon>Dictyostelium</taxon>
    </lineage>
</organism>
<name>NDOR1_DICDI</name>
<sequence>MNKKCTIIYATESGTSQEVAEKLSRDLVLYEIKPRLIDVTNYNKLELPMEKIVIFVLSTTGHGEVPDPMKPLWNFLLIKSLPSNSLANTKFAILGLGDSSYTTYNFAAKKLYQRLQSIGGTPLLRRGDADDQHDLGIDYEVEKWSQELISKLLTIYPLSPNFNINNIKNQLNKSKYNIKIDKINENNKEIKYEIPTQFYKSKLKVNKRITVEEWEQDVRHIELDISECKELQVPIKYQSGDVAYVLPKNPIKRVNEFIELLGLHSNWIIESIEPIDKEITQSPTLLKLPITIYDLVRCYFDIMGSPRRYFFELLSHFVTNPIEKERLEFFSSTEGQDDLRTYNQKEKRNYIDVLKEFPSIEIPFEYLFDLIPPIKPRPFSISSSSLLNPNTIHLTVGINTYTTPFRRLFRTGLCSQYFSSFLNDNDNNIVPIFIKESGARLPKSNEIPIIMVGPGTGCAIFRSFMQERLYFKNNSDNNNKLGDALFYFGCRSESKDYYYRDEFESNLEKGIISKLSVAFSRDGKDGKKVYVQQYIENDSDLIWDIINNRNGYFYISGSSGRMPKDVKQSLLTIIKSNLLKNNNNNNNNNNNNNNNNNNNNNNNNNDDENNIDEIVNNYFEKLEVEKRFITETW</sequence>
<evidence type="ECO:0000255" key="1">
    <source>
        <dbReference type="HAMAP-Rule" id="MF_03178"/>
    </source>
</evidence>
<evidence type="ECO:0000256" key="2">
    <source>
        <dbReference type="SAM" id="MobiDB-lite"/>
    </source>
</evidence>
<evidence type="ECO:0000269" key="3">
    <source>
    </source>
</evidence>
<gene>
    <name type="primary">redC</name>
    <name type="synonym">ndor1</name>
    <name type="ORF">DDB_G0287983</name>
</gene>
<keyword id="KW-0963">Cytoplasm</keyword>
<keyword id="KW-0274">FAD</keyword>
<keyword id="KW-0285">Flavoprotein</keyword>
<keyword id="KW-0288">FMN</keyword>
<keyword id="KW-0521">NADP</keyword>
<keyword id="KW-0560">Oxidoreductase</keyword>
<keyword id="KW-1185">Reference proteome</keyword>
<comment type="function">
    <text evidence="1">NADPH-dependent reductase which is a central component of the cytosolic iron-sulfur (Fe-S) protein assembly (CIA) machinery. Transfers electrons from NADPH via its FAD and FMN prosthetic groups to the [2Fe-2S] cluster of the anamorsin/DRE2 homolog, another key component of the CIA machinery. In turn, this reduced cluster provides electrons for assembly of cytosolic iron-sulfur cluster proteins.</text>
</comment>
<comment type="catalytic activity">
    <reaction evidence="1">
        <text>2 oxidized [2Fe-2S]-[protein] + NADPH = 2 reduced [2Fe-2S]-[protein] + NADP(+) + H(+)</text>
        <dbReference type="Rhea" id="RHEA:67716"/>
        <dbReference type="Rhea" id="RHEA-COMP:17327"/>
        <dbReference type="Rhea" id="RHEA-COMP:17328"/>
        <dbReference type="ChEBI" id="CHEBI:15378"/>
        <dbReference type="ChEBI" id="CHEBI:33737"/>
        <dbReference type="ChEBI" id="CHEBI:33738"/>
        <dbReference type="ChEBI" id="CHEBI:57783"/>
        <dbReference type="ChEBI" id="CHEBI:58349"/>
    </reaction>
    <physiologicalReaction direction="left-to-right" evidence="1">
        <dbReference type="Rhea" id="RHEA:67717"/>
    </physiologicalReaction>
</comment>
<comment type="cofactor">
    <cofactor evidence="1">
        <name>FAD</name>
        <dbReference type="ChEBI" id="CHEBI:57692"/>
    </cofactor>
</comment>
<comment type="cofactor">
    <cofactor evidence="1">
        <name>FMN</name>
        <dbReference type="ChEBI" id="CHEBI:58210"/>
    </cofactor>
</comment>
<comment type="subcellular location">
    <subcellularLocation>
        <location evidence="1">Cytoplasm</location>
    </subcellularLocation>
</comment>
<comment type="developmental stage">
    <text evidence="3">Only detected in vegetative growing cells.</text>
</comment>
<comment type="similarity">
    <text evidence="1">Belongs to the NADPH-dependent diflavin oxidoreductase NDOR1 family.</text>
</comment>
<comment type="similarity">
    <text evidence="1">In the N-terminal section; belongs to the flavodoxin family.</text>
</comment>
<comment type="similarity">
    <text evidence="1">In the C-terminal section; belongs to the flavoprotein pyridine nucleotide cytochrome reductase family.</text>
</comment>
<protein>
    <recommendedName>
        <fullName evidence="1">NADPH-dependent diflavin oxidoreductase 1</fullName>
        <ecNumber evidence="1">1.18.1.-</ecNumber>
    </recommendedName>
    <alternativeName>
        <fullName>NADPH oxidoreductase C</fullName>
    </alternativeName>
    <alternativeName>
        <fullName evidence="1">NADPH-dependent FMN and FAD-containing oxidoreductase</fullName>
    </alternativeName>
</protein>
<reference key="1">
    <citation type="journal article" date="2005" name="Nature">
        <title>The genome of the social amoeba Dictyostelium discoideum.</title>
        <authorList>
            <person name="Eichinger L."/>
            <person name="Pachebat J.A."/>
            <person name="Gloeckner G."/>
            <person name="Rajandream M.A."/>
            <person name="Sucgang R."/>
            <person name="Berriman M."/>
            <person name="Song J."/>
            <person name="Olsen R."/>
            <person name="Szafranski K."/>
            <person name="Xu Q."/>
            <person name="Tunggal B."/>
            <person name="Kummerfeld S."/>
            <person name="Madera M."/>
            <person name="Konfortov B.A."/>
            <person name="Rivero F."/>
            <person name="Bankier A.T."/>
            <person name="Lehmann R."/>
            <person name="Hamlin N."/>
            <person name="Davies R."/>
            <person name="Gaudet P."/>
            <person name="Fey P."/>
            <person name="Pilcher K."/>
            <person name="Chen G."/>
            <person name="Saunders D."/>
            <person name="Sodergren E.J."/>
            <person name="Davis P."/>
            <person name="Kerhornou A."/>
            <person name="Nie X."/>
            <person name="Hall N."/>
            <person name="Anjard C."/>
            <person name="Hemphill L."/>
            <person name="Bason N."/>
            <person name="Farbrother P."/>
            <person name="Desany B."/>
            <person name="Just E."/>
            <person name="Morio T."/>
            <person name="Rost R."/>
            <person name="Churcher C.M."/>
            <person name="Cooper J."/>
            <person name="Haydock S."/>
            <person name="van Driessche N."/>
            <person name="Cronin A."/>
            <person name="Goodhead I."/>
            <person name="Muzny D.M."/>
            <person name="Mourier T."/>
            <person name="Pain A."/>
            <person name="Lu M."/>
            <person name="Harper D."/>
            <person name="Lindsay R."/>
            <person name="Hauser H."/>
            <person name="James K.D."/>
            <person name="Quiles M."/>
            <person name="Madan Babu M."/>
            <person name="Saito T."/>
            <person name="Buchrieser C."/>
            <person name="Wardroper A."/>
            <person name="Felder M."/>
            <person name="Thangavelu M."/>
            <person name="Johnson D."/>
            <person name="Knights A."/>
            <person name="Loulseged H."/>
            <person name="Mungall K.L."/>
            <person name="Oliver K."/>
            <person name="Price C."/>
            <person name="Quail M.A."/>
            <person name="Urushihara H."/>
            <person name="Hernandez J."/>
            <person name="Rabbinowitsch E."/>
            <person name="Steffen D."/>
            <person name="Sanders M."/>
            <person name="Ma J."/>
            <person name="Kohara Y."/>
            <person name="Sharp S."/>
            <person name="Simmonds M.N."/>
            <person name="Spiegler S."/>
            <person name="Tivey A."/>
            <person name="Sugano S."/>
            <person name="White B."/>
            <person name="Walker D."/>
            <person name="Woodward J.R."/>
            <person name="Winckler T."/>
            <person name="Tanaka Y."/>
            <person name="Shaulsky G."/>
            <person name="Schleicher M."/>
            <person name="Weinstock G.M."/>
            <person name="Rosenthal A."/>
            <person name="Cox E.C."/>
            <person name="Chisholm R.L."/>
            <person name="Gibbs R.A."/>
            <person name="Loomis W.F."/>
            <person name="Platzer M."/>
            <person name="Kay R.R."/>
            <person name="Williams J.G."/>
            <person name="Dear P.H."/>
            <person name="Noegel A.A."/>
            <person name="Barrell B.G."/>
            <person name="Kuspa A."/>
        </authorList>
    </citation>
    <scope>NUCLEOTIDE SEQUENCE [LARGE SCALE GENOMIC DNA]</scope>
    <source>
        <strain>AX4</strain>
    </source>
</reference>
<reference key="2">
    <citation type="journal article" date="2008" name="BMC Dev. Biol.">
        <title>The P450 oxidoreductase, RedA, controls development beyond the mound stage in Dictyostelium discoideum.</title>
        <authorList>
            <person name="Gonzalez-Kristeller D.C."/>
            <person name="Farage L."/>
            <person name="Fiorini L.C."/>
            <person name="Loomis W.F."/>
            <person name="da Silva A.M."/>
        </authorList>
    </citation>
    <scope>DEVELOPMENTAL STAGE</scope>
</reference>
<accession>Q54JL0</accession>
<feature type="chain" id="PRO_0000330833" description="NADPH-dependent diflavin oxidoreductase 1">
    <location>
        <begin position="1"/>
        <end position="633"/>
    </location>
</feature>
<feature type="domain" description="Flavodoxin-like" evidence="1">
    <location>
        <begin position="5"/>
        <end position="149"/>
    </location>
</feature>
<feature type="domain" description="FAD-binding FR-type" evidence="1">
    <location>
        <begin position="196"/>
        <end position="442"/>
    </location>
</feature>
<feature type="region of interest" description="Disordered" evidence="2">
    <location>
        <begin position="580"/>
        <end position="610"/>
    </location>
</feature>
<feature type="compositionally biased region" description="Low complexity" evidence="2">
    <location>
        <begin position="581"/>
        <end position="604"/>
    </location>
</feature>
<feature type="binding site" evidence="1">
    <location>
        <begin position="11"/>
        <end position="16"/>
    </location>
    <ligand>
        <name>FMN</name>
        <dbReference type="ChEBI" id="CHEBI:58210"/>
    </ligand>
</feature>
<feature type="binding site" evidence="1">
    <location>
        <begin position="58"/>
        <end position="61"/>
    </location>
    <ligand>
        <name>FMN</name>
        <dbReference type="ChEBI" id="CHEBI:58210"/>
    </ligand>
</feature>
<feature type="binding site" evidence="1">
    <location>
        <position position="131"/>
    </location>
    <ligand>
        <name>FMN</name>
        <dbReference type="ChEBI" id="CHEBI:58210"/>
    </ligand>
</feature>
<feature type="binding site" evidence="1">
    <location>
        <begin position="377"/>
        <end position="380"/>
    </location>
    <ligand>
        <name>FAD</name>
        <dbReference type="ChEBI" id="CHEBI:57692"/>
    </ligand>
</feature>
<feature type="binding site" evidence="1">
    <location>
        <begin position="412"/>
        <end position="415"/>
    </location>
    <ligand>
        <name>FAD</name>
        <dbReference type="ChEBI" id="CHEBI:57692"/>
    </ligand>
</feature>
<feature type="binding site" evidence="1">
    <location>
        <position position="456"/>
    </location>
    <ligand>
        <name>NADP(+)</name>
        <dbReference type="ChEBI" id="CHEBI:58349"/>
    </ligand>
</feature>
<feature type="binding site" evidence="1">
    <location>
        <begin position="520"/>
        <end position="521"/>
    </location>
    <ligand>
        <name>NADP(+)</name>
        <dbReference type="ChEBI" id="CHEBI:58349"/>
    </ligand>
</feature>
<feature type="binding site" evidence="1">
    <location>
        <begin position="528"/>
        <end position="532"/>
    </location>
    <ligand>
        <name>NADP(+)</name>
        <dbReference type="ChEBI" id="CHEBI:58349"/>
    </ligand>
</feature>
<feature type="binding site" evidence="1">
    <location>
        <position position="565"/>
    </location>
    <ligand>
        <name>NADP(+)</name>
        <dbReference type="ChEBI" id="CHEBI:58349"/>
    </ligand>
</feature>
<feature type="binding site" evidence="1">
    <location>
        <position position="633"/>
    </location>
    <ligand>
        <name>FAD</name>
        <dbReference type="ChEBI" id="CHEBI:57692"/>
    </ligand>
</feature>
<dbReference type="EC" id="1.18.1.-" evidence="1"/>
<dbReference type="EMBL" id="AAFI02000107">
    <property type="protein sequence ID" value="EAL63417.1"/>
    <property type="molecule type" value="Genomic_DNA"/>
</dbReference>
<dbReference type="RefSeq" id="XP_636921.1">
    <property type="nucleotide sequence ID" value="XM_631829.1"/>
</dbReference>
<dbReference type="SMR" id="Q54JL0"/>
<dbReference type="FunCoup" id="Q54JL0">
    <property type="interactions" value="562"/>
</dbReference>
<dbReference type="STRING" id="44689.Q54JL0"/>
<dbReference type="PaxDb" id="44689-DDB0266666"/>
<dbReference type="EnsemblProtists" id="EAL63417">
    <property type="protein sequence ID" value="EAL63417"/>
    <property type="gene ID" value="DDB_G0287983"/>
</dbReference>
<dbReference type="GeneID" id="8626396"/>
<dbReference type="KEGG" id="ddi:DDB_G0287983"/>
<dbReference type="dictyBase" id="DDB_G0287983">
    <property type="gene designation" value="redC"/>
</dbReference>
<dbReference type="VEuPathDB" id="AmoebaDB:DDB_G0287983"/>
<dbReference type="eggNOG" id="KOG1159">
    <property type="taxonomic scope" value="Eukaryota"/>
</dbReference>
<dbReference type="HOGENOM" id="CLU_001570_17_6_1"/>
<dbReference type="InParanoid" id="Q54JL0"/>
<dbReference type="OMA" id="DIMSIPR"/>
<dbReference type="PhylomeDB" id="Q54JL0"/>
<dbReference type="PRO" id="PR:Q54JL0"/>
<dbReference type="Proteomes" id="UP000002195">
    <property type="component" value="Chromosome 5"/>
</dbReference>
<dbReference type="GO" id="GO:0005737">
    <property type="term" value="C:cytoplasm"/>
    <property type="evidence" value="ECO:0000250"/>
    <property type="project" value="dictyBase"/>
</dbReference>
<dbReference type="GO" id="GO:0005829">
    <property type="term" value="C:cytosol"/>
    <property type="evidence" value="ECO:0000318"/>
    <property type="project" value="GO_Central"/>
</dbReference>
<dbReference type="GO" id="GO:0050660">
    <property type="term" value="F:flavin adenine dinucleotide binding"/>
    <property type="evidence" value="ECO:0000250"/>
    <property type="project" value="dictyBase"/>
</dbReference>
<dbReference type="GO" id="GO:0010181">
    <property type="term" value="F:FMN binding"/>
    <property type="evidence" value="ECO:0000250"/>
    <property type="project" value="dictyBase"/>
</dbReference>
<dbReference type="GO" id="GO:0050661">
    <property type="term" value="F:NADP binding"/>
    <property type="evidence" value="ECO:0000250"/>
    <property type="project" value="dictyBase"/>
</dbReference>
<dbReference type="GO" id="GO:0003958">
    <property type="term" value="F:NADPH-hemoprotein reductase activity"/>
    <property type="evidence" value="ECO:0007669"/>
    <property type="project" value="InterPro"/>
</dbReference>
<dbReference type="GO" id="GO:0016491">
    <property type="term" value="F:oxidoreductase activity"/>
    <property type="evidence" value="ECO:0000318"/>
    <property type="project" value="GO_Central"/>
</dbReference>
<dbReference type="GO" id="GO:0016226">
    <property type="term" value="P:iron-sulfur cluster assembly"/>
    <property type="evidence" value="ECO:0007669"/>
    <property type="project" value="UniProtKB-UniRule"/>
</dbReference>
<dbReference type="FunFam" id="1.20.990.10:FF:000015">
    <property type="entry name" value="NADPH-dependent diflavin oxidoreductase 1"/>
    <property type="match status" value="1"/>
</dbReference>
<dbReference type="Gene3D" id="3.40.50.360">
    <property type="match status" value="1"/>
</dbReference>
<dbReference type="Gene3D" id="1.20.990.10">
    <property type="entry name" value="NADPH-cytochrome p450 Reductase, Chain A, domain 3"/>
    <property type="match status" value="1"/>
</dbReference>
<dbReference type="Gene3D" id="3.40.50.80">
    <property type="entry name" value="Nucleotide-binding domain of ferredoxin-NADP reductase (FNR) module"/>
    <property type="match status" value="1"/>
</dbReference>
<dbReference type="Gene3D" id="2.40.30.10">
    <property type="entry name" value="Translation factors"/>
    <property type="match status" value="1"/>
</dbReference>
<dbReference type="HAMAP" id="MF_03178">
    <property type="entry name" value="NDOR1"/>
    <property type="match status" value="1"/>
</dbReference>
<dbReference type="InterPro" id="IPR003097">
    <property type="entry name" value="CysJ-like_FAD-binding"/>
</dbReference>
<dbReference type="InterPro" id="IPR017927">
    <property type="entry name" value="FAD-bd_FR_type"/>
</dbReference>
<dbReference type="InterPro" id="IPR001094">
    <property type="entry name" value="Flavdoxin-like"/>
</dbReference>
<dbReference type="InterPro" id="IPR008254">
    <property type="entry name" value="Flavodoxin/NO_synth"/>
</dbReference>
<dbReference type="InterPro" id="IPR001709">
    <property type="entry name" value="Flavoprot_Pyr_Nucl_cyt_Rdtase"/>
</dbReference>
<dbReference type="InterPro" id="IPR029039">
    <property type="entry name" value="Flavoprotein-like_sf"/>
</dbReference>
<dbReference type="InterPro" id="IPR039261">
    <property type="entry name" value="FNR_nucleotide-bd"/>
</dbReference>
<dbReference type="InterPro" id="IPR023173">
    <property type="entry name" value="NADPH_Cyt_P450_Rdtase_alpha"/>
</dbReference>
<dbReference type="InterPro" id="IPR028879">
    <property type="entry name" value="NDOR1"/>
</dbReference>
<dbReference type="InterPro" id="IPR001433">
    <property type="entry name" value="OxRdtase_FAD/NAD-bd"/>
</dbReference>
<dbReference type="InterPro" id="IPR017938">
    <property type="entry name" value="Riboflavin_synthase-like_b-brl"/>
</dbReference>
<dbReference type="PANTHER" id="PTHR19384:SF10">
    <property type="entry name" value="NADPH-DEPENDENT DIFLAVIN OXIDOREDUCTASE 1"/>
    <property type="match status" value="1"/>
</dbReference>
<dbReference type="PANTHER" id="PTHR19384">
    <property type="entry name" value="NITRIC OXIDE SYNTHASE-RELATED"/>
    <property type="match status" value="1"/>
</dbReference>
<dbReference type="Pfam" id="PF00667">
    <property type="entry name" value="FAD_binding_1"/>
    <property type="match status" value="1"/>
</dbReference>
<dbReference type="Pfam" id="PF00258">
    <property type="entry name" value="Flavodoxin_1"/>
    <property type="match status" value="1"/>
</dbReference>
<dbReference type="Pfam" id="PF00175">
    <property type="entry name" value="NAD_binding_1"/>
    <property type="match status" value="1"/>
</dbReference>
<dbReference type="PRINTS" id="PR00369">
    <property type="entry name" value="FLAVODOXIN"/>
</dbReference>
<dbReference type="PRINTS" id="PR00371">
    <property type="entry name" value="FPNCR"/>
</dbReference>
<dbReference type="SUPFAM" id="SSF52343">
    <property type="entry name" value="Ferredoxin reductase-like, C-terminal NADP-linked domain"/>
    <property type="match status" value="1"/>
</dbReference>
<dbReference type="SUPFAM" id="SSF52218">
    <property type="entry name" value="Flavoproteins"/>
    <property type="match status" value="1"/>
</dbReference>
<dbReference type="SUPFAM" id="SSF63380">
    <property type="entry name" value="Riboflavin synthase domain-like"/>
    <property type="match status" value="1"/>
</dbReference>
<dbReference type="PROSITE" id="PS51384">
    <property type="entry name" value="FAD_FR"/>
    <property type="match status" value="1"/>
</dbReference>
<dbReference type="PROSITE" id="PS50902">
    <property type="entry name" value="FLAVODOXIN_LIKE"/>
    <property type="match status" value="1"/>
</dbReference>